<sequence length="431" mass="46682">MSKLDTTKSKIAFKEAQKYMPGGVNSPVRAFKNVGGDPLFIDHGKDEYIYDIDGNKYIDYVLSWGPLILGHADDHVVAELDKAVAKGTSYGAPTLQETELAKIVNKIMPSIEMIRMVSSGTEATMSAIRLARGYTHRKKIVKFVGNYHGHSDSLLVDAGSGLATFGINTSPGVPDDLAYDTLTVAYNDVAGVKKLFAEHGDEIACAIVEPVAGNMGVIPGTQEFLQTLRNVTNEHGALLIFDEVMSGFRAAYHGVQSLVNITPDLTTLGKVIGGGLPVGAFGGRREIMENITPAGDIYHAGTLSGNPLAMTGGISTLEQLTPDDYVEMDKKVTALTEGIKHAADQYGVPMTVHHVGTMWSYFYNSDPINNFDDVKACDQKLFEKCFWELLAHGVYVAPSQFETNFISTKHTDEDIEKTIAAFDAAFNAATK</sequence>
<evidence type="ECO:0000255" key="1">
    <source>
        <dbReference type="HAMAP-Rule" id="MF_00375"/>
    </source>
</evidence>
<keyword id="KW-0963">Cytoplasm</keyword>
<keyword id="KW-0413">Isomerase</keyword>
<keyword id="KW-0627">Porphyrin biosynthesis</keyword>
<keyword id="KW-0663">Pyridoxal phosphate</keyword>
<organism>
    <name type="scientific">Limosilactobacillus reuteri subsp. reuteri (strain JCM 1112)</name>
    <name type="common">Lactobacillus reuteri</name>
    <dbReference type="NCBI Taxonomy" id="557433"/>
    <lineage>
        <taxon>Bacteria</taxon>
        <taxon>Bacillati</taxon>
        <taxon>Bacillota</taxon>
        <taxon>Bacilli</taxon>
        <taxon>Lactobacillales</taxon>
        <taxon>Lactobacillaceae</taxon>
        <taxon>Limosilactobacillus</taxon>
    </lineage>
</organism>
<protein>
    <recommendedName>
        <fullName evidence="1">Glutamate-1-semialdehyde 2,1-aminomutase</fullName>
        <shortName evidence="1">GSA</shortName>
        <ecNumber evidence="1">5.4.3.8</ecNumber>
    </recommendedName>
    <alternativeName>
        <fullName evidence="1">Glutamate-1-semialdehyde aminotransferase</fullName>
        <shortName evidence="1">GSA-AT</shortName>
    </alternativeName>
</protein>
<name>GSA_LIMRJ</name>
<gene>
    <name evidence="1" type="primary">hemL</name>
    <name type="ordered locus">LAR_1588</name>
</gene>
<proteinExistence type="inferred from homology"/>
<accession>B2G9H2</accession>
<reference key="1">
    <citation type="journal article" date="2008" name="DNA Res.">
        <title>Comparative genome analysis of Lactobacillus reuteri and Lactobacillus fermentum reveal a genomic island for reuterin and cobalamin production.</title>
        <authorList>
            <person name="Morita H."/>
            <person name="Toh H."/>
            <person name="Fukuda S."/>
            <person name="Horikawa H."/>
            <person name="Oshima K."/>
            <person name="Suzuki T."/>
            <person name="Murakami M."/>
            <person name="Hisamatsu S."/>
            <person name="Kato Y."/>
            <person name="Takizawa T."/>
            <person name="Fukuoka H."/>
            <person name="Yoshimura T."/>
            <person name="Itoh K."/>
            <person name="O'Sullivan D.J."/>
            <person name="McKay L.L."/>
            <person name="Ohno H."/>
            <person name="Kikuchi J."/>
            <person name="Masaoka T."/>
            <person name="Hattori M."/>
        </authorList>
    </citation>
    <scope>NUCLEOTIDE SEQUENCE [LARGE SCALE GENOMIC DNA]</scope>
    <source>
        <strain>JCM 1112</strain>
    </source>
</reference>
<dbReference type="EC" id="5.4.3.8" evidence="1"/>
<dbReference type="EMBL" id="AP007281">
    <property type="protein sequence ID" value="BAG26104.1"/>
    <property type="molecule type" value="Genomic_DNA"/>
</dbReference>
<dbReference type="SMR" id="B2G9H2"/>
<dbReference type="KEGG" id="lrf:LAR_1588"/>
<dbReference type="HOGENOM" id="CLU_016922_1_5_9"/>
<dbReference type="UniPathway" id="UPA00251">
    <property type="reaction ID" value="UER00317"/>
</dbReference>
<dbReference type="GO" id="GO:0005737">
    <property type="term" value="C:cytoplasm"/>
    <property type="evidence" value="ECO:0007669"/>
    <property type="project" value="UniProtKB-SubCell"/>
</dbReference>
<dbReference type="GO" id="GO:0042286">
    <property type="term" value="F:glutamate-1-semialdehyde 2,1-aminomutase activity"/>
    <property type="evidence" value="ECO:0007669"/>
    <property type="project" value="UniProtKB-UniRule"/>
</dbReference>
<dbReference type="GO" id="GO:0030170">
    <property type="term" value="F:pyridoxal phosphate binding"/>
    <property type="evidence" value="ECO:0007669"/>
    <property type="project" value="InterPro"/>
</dbReference>
<dbReference type="GO" id="GO:0008483">
    <property type="term" value="F:transaminase activity"/>
    <property type="evidence" value="ECO:0007669"/>
    <property type="project" value="InterPro"/>
</dbReference>
<dbReference type="GO" id="GO:0006782">
    <property type="term" value="P:protoporphyrinogen IX biosynthetic process"/>
    <property type="evidence" value="ECO:0007669"/>
    <property type="project" value="UniProtKB-UniRule"/>
</dbReference>
<dbReference type="CDD" id="cd00610">
    <property type="entry name" value="OAT_like"/>
    <property type="match status" value="1"/>
</dbReference>
<dbReference type="FunFam" id="3.40.640.10:FF:000021">
    <property type="entry name" value="Glutamate-1-semialdehyde 2,1-aminomutase"/>
    <property type="match status" value="1"/>
</dbReference>
<dbReference type="Gene3D" id="3.90.1150.10">
    <property type="entry name" value="Aspartate Aminotransferase, domain 1"/>
    <property type="match status" value="1"/>
</dbReference>
<dbReference type="Gene3D" id="3.40.640.10">
    <property type="entry name" value="Type I PLP-dependent aspartate aminotransferase-like (Major domain)"/>
    <property type="match status" value="1"/>
</dbReference>
<dbReference type="HAMAP" id="MF_00375">
    <property type="entry name" value="HemL_aminotrans_3"/>
    <property type="match status" value="1"/>
</dbReference>
<dbReference type="InterPro" id="IPR004639">
    <property type="entry name" value="4pyrrol_synth_GluAld_NH2Trfase"/>
</dbReference>
<dbReference type="InterPro" id="IPR005814">
    <property type="entry name" value="Aminotrans_3"/>
</dbReference>
<dbReference type="InterPro" id="IPR049704">
    <property type="entry name" value="Aminotrans_3_PPA_site"/>
</dbReference>
<dbReference type="InterPro" id="IPR015424">
    <property type="entry name" value="PyrdxlP-dep_Trfase"/>
</dbReference>
<dbReference type="InterPro" id="IPR015421">
    <property type="entry name" value="PyrdxlP-dep_Trfase_major"/>
</dbReference>
<dbReference type="InterPro" id="IPR015422">
    <property type="entry name" value="PyrdxlP-dep_Trfase_small"/>
</dbReference>
<dbReference type="NCBIfam" id="TIGR00713">
    <property type="entry name" value="hemL"/>
    <property type="match status" value="1"/>
</dbReference>
<dbReference type="NCBIfam" id="NF000818">
    <property type="entry name" value="PRK00062.1"/>
    <property type="match status" value="1"/>
</dbReference>
<dbReference type="PANTHER" id="PTHR43713">
    <property type="entry name" value="GLUTAMATE-1-SEMIALDEHYDE 2,1-AMINOMUTASE"/>
    <property type="match status" value="1"/>
</dbReference>
<dbReference type="PANTHER" id="PTHR43713:SF3">
    <property type="entry name" value="GLUTAMATE-1-SEMIALDEHYDE 2,1-AMINOMUTASE 1, CHLOROPLASTIC-RELATED"/>
    <property type="match status" value="1"/>
</dbReference>
<dbReference type="Pfam" id="PF00202">
    <property type="entry name" value="Aminotran_3"/>
    <property type="match status" value="1"/>
</dbReference>
<dbReference type="SUPFAM" id="SSF53383">
    <property type="entry name" value="PLP-dependent transferases"/>
    <property type="match status" value="1"/>
</dbReference>
<dbReference type="PROSITE" id="PS00600">
    <property type="entry name" value="AA_TRANSFER_CLASS_3"/>
    <property type="match status" value="1"/>
</dbReference>
<feature type="chain" id="PRO_0000382325" description="Glutamate-1-semialdehyde 2,1-aminomutase">
    <location>
        <begin position="1"/>
        <end position="431"/>
    </location>
</feature>
<feature type="modified residue" description="N6-(pyridoxal phosphate)lysine" evidence="1">
    <location>
        <position position="270"/>
    </location>
</feature>
<comment type="catalytic activity">
    <reaction evidence="1">
        <text>(S)-4-amino-5-oxopentanoate = 5-aminolevulinate</text>
        <dbReference type="Rhea" id="RHEA:14265"/>
        <dbReference type="ChEBI" id="CHEBI:57501"/>
        <dbReference type="ChEBI" id="CHEBI:356416"/>
        <dbReference type="EC" id="5.4.3.8"/>
    </reaction>
</comment>
<comment type="cofactor">
    <cofactor evidence="1">
        <name>pyridoxal 5'-phosphate</name>
        <dbReference type="ChEBI" id="CHEBI:597326"/>
    </cofactor>
</comment>
<comment type="pathway">
    <text evidence="1">Porphyrin-containing compound metabolism; protoporphyrin-IX biosynthesis; 5-aminolevulinate from L-glutamyl-tRNA(Glu): step 2/2.</text>
</comment>
<comment type="subunit">
    <text evidence="1">Homodimer.</text>
</comment>
<comment type="subcellular location">
    <subcellularLocation>
        <location evidence="1">Cytoplasm</location>
    </subcellularLocation>
</comment>
<comment type="similarity">
    <text evidence="1">Belongs to the class-III pyridoxal-phosphate-dependent aminotransferase family. HemL subfamily.</text>
</comment>